<keyword id="KW-0030">Aminoacyl-tRNA synthetase</keyword>
<keyword id="KW-0067">ATP-binding</keyword>
<keyword id="KW-0963">Cytoplasm</keyword>
<keyword id="KW-0436">Ligase</keyword>
<keyword id="KW-0479">Metal-binding</keyword>
<keyword id="KW-0547">Nucleotide-binding</keyword>
<keyword id="KW-0648">Protein biosynthesis</keyword>
<keyword id="KW-1185">Reference proteome</keyword>
<keyword id="KW-0862">Zinc</keyword>
<evidence type="ECO:0000255" key="1">
    <source>
        <dbReference type="HAMAP-Rule" id="MF_02003"/>
    </source>
</evidence>
<reference key="1">
    <citation type="submission" date="2004-12" db="EMBL/GenBank/DDBJ databases">
        <title>The genome sequence of Borrelia hermsii and Borrelia turicatae: comparative analysis of two agents of endemic N. America relapsing fever.</title>
        <authorList>
            <person name="Porcella S.F."/>
            <person name="Raffel S.J."/>
            <person name="Schrumpf M.E."/>
            <person name="Montgomery B."/>
            <person name="Smith T."/>
            <person name="Schwan T.G."/>
        </authorList>
    </citation>
    <scope>NUCLEOTIDE SEQUENCE [LARGE SCALE GENOMIC DNA]</scope>
    <source>
        <strain>91E135</strain>
    </source>
</reference>
<organism>
    <name type="scientific">Borrelia turicatae (strain 91E135)</name>
    <dbReference type="NCBI Taxonomy" id="314724"/>
    <lineage>
        <taxon>Bacteria</taxon>
        <taxon>Pseudomonadati</taxon>
        <taxon>Spirochaetota</taxon>
        <taxon>Spirochaetia</taxon>
        <taxon>Spirochaetales</taxon>
        <taxon>Borreliaceae</taxon>
        <taxon>Borrelia</taxon>
    </lineage>
</organism>
<accession>A1R0Q9</accession>
<gene>
    <name evidence="1" type="primary">ileS</name>
    <name type="ordered locus">BT0833</name>
</gene>
<comment type="function">
    <text evidence="1">Catalyzes the attachment of isoleucine to tRNA(Ile). As IleRS can inadvertently accommodate and process structurally similar amino acids such as valine, to avoid such errors it has two additional distinct tRNA(Ile)-dependent editing activities. One activity is designated as 'pretransfer' editing and involves the hydrolysis of activated Val-AMP. The other activity is designated 'posttransfer' editing and involves deacylation of mischarged Val-tRNA(Ile).</text>
</comment>
<comment type="catalytic activity">
    <reaction evidence="1">
        <text>tRNA(Ile) + L-isoleucine + ATP = L-isoleucyl-tRNA(Ile) + AMP + diphosphate</text>
        <dbReference type="Rhea" id="RHEA:11060"/>
        <dbReference type="Rhea" id="RHEA-COMP:9666"/>
        <dbReference type="Rhea" id="RHEA-COMP:9695"/>
        <dbReference type="ChEBI" id="CHEBI:30616"/>
        <dbReference type="ChEBI" id="CHEBI:33019"/>
        <dbReference type="ChEBI" id="CHEBI:58045"/>
        <dbReference type="ChEBI" id="CHEBI:78442"/>
        <dbReference type="ChEBI" id="CHEBI:78528"/>
        <dbReference type="ChEBI" id="CHEBI:456215"/>
        <dbReference type="EC" id="6.1.1.5"/>
    </reaction>
</comment>
<comment type="cofactor">
    <cofactor evidence="1">
        <name>Zn(2+)</name>
        <dbReference type="ChEBI" id="CHEBI:29105"/>
    </cofactor>
</comment>
<comment type="subunit">
    <text evidence="1">Monomer.</text>
</comment>
<comment type="subcellular location">
    <subcellularLocation>
        <location evidence="1">Cytoplasm</location>
    </subcellularLocation>
</comment>
<comment type="domain">
    <text evidence="1">IleRS has two distinct active sites: one for aminoacylation and one for editing. The misactivated valine is translocated from the active site to the editing site, which sterically excludes the correctly activated isoleucine. The single editing site contains two valyl binding pockets, one specific for each substrate (Val-AMP or Val-tRNA(Ile)).</text>
</comment>
<comment type="similarity">
    <text evidence="1">Belongs to the class-I aminoacyl-tRNA synthetase family. IleS type 2 subfamily.</text>
</comment>
<name>SYI_BORT9</name>
<dbReference type="EC" id="6.1.1.5" evidence="1"/>
<dbReference type="EMBL" id="CP000049">
    <property type="protein sequence ID" value="AAX18150.1"/>
    <property type="molecule type" value="Genomic_DNA"/>
</dbReference>
<dbReference type="RefSeq" id="WP_011772768.1">
    <property type="nucleotide sequence ID" value="NC_008710.1"/>
</dbReference>
<dbReference type="SMR" id="A1R0Q9"/>
<dbReference type="KEGG" id="btu:BT0833"/>
<dbReference type="eggNOG" id="COG0060">
    <property type="taxonomic scope" value="Bacteria"/>
</dbReference>
<dbReference type="HOGENOM" id="CLU_001493_1_1_12"/>
<dbReference type="Proteomes" id="UP000001205">
    <property type="component" value="Chromosome"/>
</dbReference>
<dbReference type="GO" id="GO:0005737">
    <property type="term" value="C:cytoplasm"/>
    <property type="evidence" value="ECO:0007669"/>
    <property type="project" value="UniProtKB-SubCell"/>
</dbReference>
<dbReference type="GO" id="GO:0002161">
    <property type="term" value="F:aminoacyl-tRNA deacylase activity"/>
    <property type="evidence" value="ECO:0007669"/>
    <property type="project" value="InterPro"/>
</dbReference>
<dbReference type="GO" id="GO:0005524">
    <property type="term" value="F:ATP binding"/>
    <property type="evidence" value="ECO:0007669"/>
    <property type="project" value="UniProtKB-UniRule"/>
</dbReference>
<dbReference type="GO" id="GO:0004822">
    <property type="term" value="F:isoleucine-tRNA ligase activity"/>
    <property type="evidence" value="ECO:0007669"/>
    <property type="project" value="UniProtKB-UniRule"/>
</dbReference>
<dbReference type="GO" id="GO:0000049">
    <property type="term" value="F:tRNA binding"/>
    <property type="evidence" value="ECO:0007669"/>
    <property type="project" value="InterPro"/>
</dbReference>
<dbReference type="GO" id="GO:0008270">
    <property type="term" value="F:zinc ion binding"/>
    <property type="evidence" value="ECO:0007669"/>
    <property type="project" value="UniProtKB-UniRule"/>
</dbReference>
<dbReference type="GO" id="GO:0006428">
    <property type="term" value="P:isoleucyl-tRNA aminoacylation"/>
    <property type="evidence" value="ECO:0007669"/>
    <property type="project" value="UniProtKB-UniRule"/>
</dbReference>
<dbReference type="CDD" id="cd07961">
    <property type="entry name" value="Anticodon_Ia_Ile_ABEc"/>
    <property type="match status" value="1"/>
</dbReference>
<dbReference type="CDD" id="cd00818">
    <property type="entry name" value="IleRS_core"/>
    <property type="match status" value="1"/>
</dbReference>
<dbReference type="FunFam" id="3.40.50.620:FF:000063">
    <property type="entry name" value="Isoleucine--tRNA ligase"/>
    <property type="match status" value="1"/>
</dbReference>
<dbReference type="FunFam" id="3.40.50.620:FF:000133">
    <property type="entry name" value="Isoleucyl-tRNA synthetase, cytoplasmic"/>
    <property type="match status" value="1"/>
</dbReference>
<dbReference type="Gene3D" id="3.40.50.620">
    <property type="entry name" value="HUPs"/>
    <property type="match status" value="2"/>
</dbReference>
<dbReference type="Gene3D" id="1.10.730.10">
    <property type="entry name" value="Isoleucyl-tRNA Synthetase, Domain 1"/>
    <property type="match status" value="1"/>
</dbReference>
<dbReference type="HAMAP" id="MF_02003">
    <property type="entry name" value="Ile_tRNA_synth_type2"/>
    <property type="match status" value="1"/>
</dbReference>
<dbReference type="InterPro" id="IPR002300">
    <property type="entry name" value="aa-tRNA-synth_Ia"/>
</dbReference>
<dbReference type="InterPro" id="IPR033709">
    <property type="entry name" value="Anticodon_Ile_ABEc"/>
</dbReference>
<dbReference type="InterPro" id="IPR002301">
    <property type="entry name" value="Ile-tRNA-ligase"/>
</dbReference>
<dbReference type="InterPro" id="IPR023586">
    <property type="entry name" value="Ile-tRNA-ligase_type2"/>
</dbReference>
<dbReference type="InterPro" id="IPR013155">
    <property type="entry name" value="M/V/L/I-tRNA-synth_anticd-bd"/>
</dbReference>
<dbReference type="InterPro" id="IPR014729">
    <property type="entry name" value="Rossmann-like_a/b/a_fold"/>
</dbReference>
<dbReference type="InterPro" id="IPR009080">
    <property type="entry name" value="tRNAsynth_Ia_anticodon-bd"/>
</dbReference>
<dbReference type="InterPro" id="IPR009008">
    <property type="entry name" value="Val/Leu/Ile-tRNA-synth_edit"/>
</dbReference>
<dbReference type="NCBIfam" id="TIGR00392">
    <property type="entry name" value="ileS"/>
    <property type="match status" value="1"/>
</dbReference>
<dbReference type="PANTHER" id="PTHR42780:SF1">
    <property type="entry name" value="ISOLEUCINE--TRNA LIGASE, CYTOPLASMIC"/>
    <property type="match status" value="1"/>
</dbReference>
<dbReference type="PANTHER" id="PTHR42780">
    <property type="entry name" value="SOLEUCYL-TRNA SYNTHETASE"/>
    <property type="match status" value="1"/>
</dbReference>
<dbReference type="Pfam" id="PF08264">
    <property type="entry name" value="Anticodon_1"/>
    <property type="match status" value="1"/>
</dbReference>
<dbReference type="Pfam" id="PF19302">
    <property type="entry name" value="DUF5915"/>
    <property type="match status" value="1"/>
</dbReference>
<dbReference type="Pfam" id="PF00133">
    <property type="entry name" value="tRNA-synt_1"/>
    <property type="match status" value="1"/>
</dbReference>
<dbReference type="PRINTS" id="PR00984">
    <property type="entry name" value="TRNASYNTHILE"/>
</dbReference>
<dbReference type="SUPFAM" id="SSF47323">
    <property type="entry name" value="Anticodon-binding domain of a subclass of class I aminoacyl-tRNA synthetases"/>
    <property type="match status" value="2"/>
</dbReference>
<dbReference type="SUPFAM" id="SSF52374">
    <property type="entry name" value="Nucleotidylyl transferase"/>
    <property type="match status" value="1"/>
</dbReference>
<dbReference type="SUPFAM" id="SSF50677">
    <property type="entry name" value="ValRS/IleRS/LeuRS editing domain"/>
    <property type="match status" value="1"/>
</dbReference>
<protein>
    <recommendedName>
        <fullName evidence="1">Isoleucine--tRNA ligase</fullName>
        <ecNumber evidence="1">6.1.1.5</ecNumber>
    </recommendedName>
    <alternativeName>
        <fullName evidence="1">Isoleucyl-tRNA synthetase</fullName>
        <shortName evidence="1">IleRS</shortName>
    </alternativeName>
</protein>
<sequence length="1044" mass="122959">MFKKVESKVNFPKIEERILKFWNDNKIFEKSIQQREGCEEFTFYDGPPFATGLPHFGHFVPNTIKDIIPRYKTMKGKQVKRYFGWDTHGLPVEYEVEKSLKISGRYEIEKYGIDKFNEECRKIVLRYTKEWQKTISRLGRWIDFENNYKTMDTTFMESVWWVFQTLYNKGLIYESYYVLPYSPKLATPLSNFEVNLGEYKEIHDPSLTIKFKIKDKNEYLLAWTTTPWTLPTNLGIAVGKDIDYSKIFDKEKDETFIIGTKRLNHYYKDEKAYTVIEQFKGEYIKGIEYEPIFNYFLNQRDKGAFKIHTAEYVTTDDGTGIVHIAPFGEEDYNILKNNTKTDMITPIDAECRFTNEVKDFEGLFVKDADNKIIEKLKSMNLLFKRENFLHRYPFCYRTNSPLIYRPISSWFVNIEAIKEKLIKSNEQINWMPSHLKKGRFGKWLENARDWAISRNRFWGNPIPVWICSKTGNKICIGSKEELERLSGQKVNDLHKDKVDKITWPSEYGGVYVRTSEVLDCWFESGSMPYASKHYPFKDKDNFHNIFPADFIAEGLDQTRGWFYTLTILGTALFENTAFKNVIVNGLVLSSDGRKMSKSLRNYTDPMEVINTFGADALRLYLVMSPVIRADDLKYSDDGVKDVLKNIIIPIWNAYSFFITYAIIDKFEPNNNINLHKTNILDKWIVSEIESLKKILNEEIDKYNLTKSIEELLAFIDKLNNWYIRRSRRRFWKSENDNDKIDAHETLYYVIKNLMLMLAPFIPFLTEEIYQNLKTKDEKESIHLNKYPQAIEKLINIDLEEKMNFIRKVVSIARALRASHNIKIRKPISTIYVVTKDQKEQQILNEMKEIILEEINAKEIKIKSNEEELVTYKAKANFRELGSKLGVNMKVGSLEIMKLTNEDILKIINGNKHIIKINENTYNITLKDIILERHERENLKIINEDSVTIGLDALITEELYLEGLSRELIRKVQNLRKENNFNVSDRIILYIDNSDILKKITNQFESYIKTETLTLKIEINKEKALTNVELDDAIFIKIGIKRWSN</sequence>
<proteinExistence type="inferred from homology"/>
<feature type="chain" id="PRO_1000216252" description="Isoleucine--tRNA ligase">
    <location>
        <begin position="1"/>
        <end position="1044"/>
    </location>
</feature>
<feature type="short sequence motif" description="'HIGH' region">
    <location>
        <begin position="48"/>
        <end position="58"/>
    </location>
</feature>
<feature type="short sequence motif" description="'KMSKS' region">
    <location>
        <begin position="594"/>
        <end position="598"/>
    </location>
</feature>
<feature type="binding site" evidence="1">
    <location>
        <position position="597"/>
    </location>
    <ligand>
        <name>ATP</name>
        <dbReference type="ChEBI" id="CHEBI:30616"/>
    </ligand>
</feature>